<name>NCAP_INBLE</name>
<organismHost>
    <name type="scientific">Homo sapiens</name>
    <name type="common">Human</name>
    <dbReference type="NCBI Taxonomy" id="9606"/>
</organismHost>
<feature type="chain" id="PRO_0000079142" description="Nucleoprotein">
    <location>
        <begin position="1"/>
        <end position="560"/>
    </location>
</feature>
<feature type="region of interest" description="Disordered" evidence="2">
    <location>
        <begin position="1"/>
        <end position="71"/>
    </location>
</feature>
<feature type="compositionally biased region" description="Polar residues" evidence="2">
    <location>
        <begin position="1"/>
        <end position="14"/>
    </location>
</feature>
<feature type="compositionally biased region" description="Low complexity" evidence="2">
    <location>
        <begin position="48"/>
        <end position="60"/>
    </location>
</feature>
<feature type="site" description="Cleavage; by host caspase">
    <location>
        <begin position="7"/>
        <end position="8"/>
    </location>
</feature>
<feature type="site" description="Cleavage; by host caspase">
    <location>
        <begin position="61"/>
        <end position="62"/>
    </location>
</feature>
<accession>P04665</accession>
<organism>
    <name type="scientific">Influenza B virus (strain B/Lee/1940)</name>
    <dbReference type="NCBI Taxonomy" id="518987"/>
    <lineage>
        <taxon>Viruses</taxon>
        <taxon>Riboviria</taxon>
        <taxon>Orthornavirae</taxon>
        <taxon>Negarnaviricota</taxon>
        <taxon>Polyploviricotina</taxon>
        <taxon>Insthoviricetes</taxon>
        <taxon>Articulavirales</taxon>
        <taxon>Orthomyxoviridae</taxon>
        <taxon>Betainfluenzavirus</taxon>
        <taxon>Betainfluenzavirus influenzae</taxon>
        <taxon>Influenza B virus</taxon>
    </lineage>
</organism>
<comment type="function">
    <text evidence="1">Encapsidates the negative strand viral RNA, protecting it from nucleases. The encapsidated genomic RNA is termed the ribonucleoprotein (RNP) and serves as template for transcription and replication. The RNP needs to be localized in the host nucleus to start an infectious cycle, but is too large to diffuse through the nuclear pore complex. NP comprises at least 2 nuclear localization signals that are responsible for the active RNP import into the nucleus through cellular importin alpha/beta pathway. Later in the infection, nclear export of RNPs are mediated through viral proteins NEP interacting with M1 which binds nucleoproteins. It is possible that nucleoprotein binds directly host exportin-1/XPO1 and plays an active role in RNPs nuclear export. M1 interaction with RNP seems to hide nucleoprotein's nuclear localization signals. Soon after a virion infects a new cell, M1 dissociates from the RNP under acidification of the virion driven by M2 protein. Dissociation of M1 from RNP unmasks nucleoprotein's nuclear localization signals, targeting the RNP to the nucleus.</text>
</comment>
<comment type="subunit">
    <text evidence="1">Homomultimerizes to form the nucleocapsid. May bind host exportin-1/XPO1. Binds to viral genomic RNA. Protein-RNA contacts are mediated by a combination of electrostatic interactions between positively charged residues and the phosphate backbone and planar interactions between aromatic side chains and bases.</text>
</comment>
<comment type="subcellular location">
    <subcellularLocation>
        <location evidence="1">Virion</location>
    </subcellularLocation>
    <subcellularLocation>
        <location evidence="1">Host nucleus</location>
    </subcellularLocation>
</comment>
<comment type="PTM">
    <text evidence="1 3">Late in virus-infected cells, may be cleaved from a 56-kDa protein to a 53-kDa protein by a cellular caspase. This cleavage might be a marker for the onset of apoptosis in infected cells or have a specific function in virus host interaction.</text>
</comment>
<comment type="similarity">
    <text evidence="1">Belongs to the influenza viruses nucleoprotein family.</text>
</comment>
<proteinExistence type="evidence at protein level"/>
<evidence type="ECO:0000255" key="1">
    <source>
        <dbReference type="HAMAP-Rule" id="MF_04070"/>
    </source>
</evidence>
<evidence type="ECO:0000256" key="2">
    <source>
        <dbReference type="SAM" id="MobiDB-lite"/>
    </source>
</evidence>
<evidence type="ECO:0000269" key="3">
    <source>
    </source>
</evidence>
<dbReference type="EMBL" id="K01395">
    <property type="protein sequence ID" value="AAA43689.1"/>
    <property type="molecule type" value="Genomic_RNA"/>
</dbReference>
<dbReference type="RefSeq" id="NP_056661.1">
    <property type="nucleotide sequence ID" value="NC_002208.1"/>
</dbReference>
<dbReference type="SMR" id="P04665"/>
<dbReference type="BindingDB" id="P04665"/>
<dbReference type="GeneID" id="26824002"/>
<dbReference type="KEGG" id="vg:26824002"/>
<dbReference type="OrthoDB" id="1815at10239"/>
<dbReference type="Proteomes" id="UP000008158">
    <property type="component" value="Genome"/>
</dbReference>
<dbReference type="GO" id="GO:0019029">
    <property type="term" value="C:helical viral capsid"/>
    <property type="evidence" value="ECO:0007669"/>
    <property type="project" value="UniProtKB-UniRule"/>
</dbReference>
<dbReference type="GO" id="GO:0043657">
    <property type="term" value="C:host cell"/>
    <property type="evidence" value="ECO:0007669"/>
    <property type="project" value="GOC"/>
</dbReference>
<dbReference type="GO" id="GO:0042025">
    <property type="term" value="C:host cell nucleus"/>
    <property type="evidence" value="ECO:0007669"/>
    <property type="project" value="UniProtKB-SubCell"/>
</dbReference>
<dbReference type="GO" id="GO:1990904">
    <property type="term" value="C:ribonucleoprotein complex"/>
    <property type="evidence" value="ECO:0007669"/>
    <property type="project" value="UniProtKB-KW"/>
</dbReference>
<dbReference type="GO" id="GO:0019013">
    <property type="term" value="C:viral nucleocapsid"/>
    <property type="evidence" value="ECO:0007669"/>
    <property type="project" value="UniProtKB-UniRule"/>
</dbReference>
<dbReference type="GO" id="GO:0003723">
    <property type="term" value="F:RNA binding"/>
    <property type="evidence" value="ECO:0007669"/>
    <property type="project" value="UniProtKB-UniRule"/>
</dbReference>
<dbReference type="GO" id="GO:0005198">
    <property type="term" value="F:structural molecule activity"/>
    <property type="evidence" value="ECO:0007669"/>
    <property type="project" value="UniProtKB-UniRule"/>
</dbReference>
<dbReference type="GO" id="GO:0046718">
    <property type="term" value="P:symbiont entry into host cell"/>
    <property type="evidence" value="ECO:0007669"/>
    <property type="project" value="UniProtKB-KW"/>
</dbReference>
<dbReference type="GO" id="GO:0075732">
    <property type="term" value="P:viral penetration into host nucleus"/>
    <property type="evidence" value="ECO:0007669"/>
    <property type="project" value="UniProtKB-UniRule"/>
</dbReference>
<dbReference type="HAMAP" id="MF_04070">
    <property type="entry name" value="INFV_NCAP"/>
    <property type="match status" value="1"/>
</dbReference>
<dbReference type="InterPro" id="IPR002141">
    <property type="entry name" value="Flu_NP"/>
</dbReference>
<dbReference type="Pfam" id="PF00506">
    <property type="entry name" value="Flu_NP"/>
    <property type="match status" value="1"/>
</dbReference>
<dbReference type="SUPFAM" id="SSF161003">
    <property type="entry name" value="flu NP-like"/>
    <property type="match status" value="1"/>
</dbReference>
<protein>
    <recommendedName>
        <fullName evidence="1">Nucleoprotein</fullName>
    </recommendedName>
    <alternativeName>
        <fullName evidence="1">Nucleocapsid protein</fullName>
        <shortName evidence="1">Protein N</shortName>
    </alternativeName>
</protein>
<gene>
    <name evidence="1" type="primary">NP</name>
</gene>
<sequence>MSNMDIDSINTGTIDKTPEELTPGTSGATRPIIKPATLAPPSNKRTRNPSPERTTTSSETDIGRKIQKKQTPTEIKKSVYKMVVKLGEFYNQMMVKAGLNDDMERNLIQNAQAVERILLAATDDKKTEYQKKRNARDVKEGKEEIDHNKTGGTFYKMVRDDKTIYFSPIKITFLKEEVKTMYKTTMGSDGFSGLNHIMIGHSQMNDVCFQRSKGLKRVGLDPSLISTFAGSTLPRRSGTTGVAIKGGGTLVDEAIRFIGRAMADRGLLRDIKAKTAYEKILLNLKNKCSAPQQKALVDQVIGSRNPGIADIEDLTLLARSMVVVRPSVASKVVLPISIYAKIPQLGFNTEEYSMVGYEAMALYNMATPVSILRMGDDAKDKSQLFFMSCFGAAYEDLRVLSALTGTEFKPRSALKCKGFHVPAKEQVEGMGAALMSIKLQFWAPMTRSGGNEVSGEGGSGQISCSPVFAVERPIALSKQAVRRMLSMNVEGRDADVKGNLLKMMNDSMAKKTSGNAFIGKKMFQISDKNKVNPIEIPIKQTIPNFFFGRDTAEDYDDLDY</sequence>
<keyword id="KW-0167">Capsid protein</keyword>
<keyword id="KW-1139">Helical capsid protein</keyword>
<keyword id="KW-1048">Host nucleus</keyword>
<keyword id="KW-0945">Host-virus interaction</keyword>
<keyword id="KW-1185">Reference proteome</keyword>
<keyword id="KW-0687">Ribonucleoprotein</keyword>
<keyword id="KW-0694">RNA-binding</keyword>
<keyword id="KW-0543">Viral nucleoprotein</keyword>
<keyword id="KW-1163">Viral penetration into host nucleus</keyword>
<keyword id="KW-0946">Virion</keyword>
<keyword id="KW-1160">Virus entry into host cell</keyword>
<reference key="1">
    <citation type="journal article" date="1984" name="Virology">
        <title>Influenza B virus genome: complete nucleotide sequence of the influenza B/lee/40 virus genome RNA segment 5 encoding the nucleoprotein and comparison with the B/Singapore/222/79 nucleoprotein.</title>
        <authorList>
            <person name="Briedis D.J."/>
            <person name="Tobin M."/>
        </authorList>
    </citation>
    <scope>NUCLEOTIDE SEQUENCE [GENOMIC RNA]</scope>
</reference>
<reference key="2">
    <citation type="journal article" date="1999" name="J. Virol.">
        <title>Caspase-dependent N-terminal cleavage of influenza virus nucleocapsid protein in infected cells.</title>
        <authorList>
            <person name="Zhirnov O.P."/>
            <person name="Konakova T.E."/>
            <person name="Garten W."/>
            <person name="Klenk H."/>
        </authorList>
    </citation>
    <scope>CLEAVAGE</scope>
</reference>